<proteinExistence type="inferred from homology"/>
<organism>
    <name type="scientific">Bacillus cereus (strain ATCC 14579 / DSM 31 / CCUG 7414 / JCM 2152 / NBRC 15305 / NCIMB 9373 / NCTC 2599 / NRRL B-3711)</name>
    <dbReference type="NCBI Taxonomy" id="226900"/>
    <lineage>
        <taxon>Bacteria</taxon>
        <taxon>Bacillati</taxon>
        <taxon>Bacillota</taxon>
        <taxon>Bacilli</taxon>
        <taxon>Bacillales</taxon>
        <taxon>Bacillaceae</taxon>
        <taxon>Bacillus</taxon>
        <taxon>Bacillus cereus group</taxon>
    </lineage>
</organism>
<dbReference type="EMBL" id="AE016877">
    <property type="protein sequence ID" value="AAP07239.1"/>
    <property type="molecule type" value="Genomic_DNA"/>
</dbReference>
<dbReference type="RefSeq" id="NP_830038.1">
    <property type="nucleotide sequence ID" value="NC_004722.1"/>
</dbReference>
<dbReference type="RefSeq" id="WP_000331490.1">
    <property type="nucleotide sequence ID" value="NZ_CP138336.1"/>
</dbReference>
<dbReference type="SMR" id="Q81J17"/>
<dbReference type="STRING" id="226900.BC_0159"/>
<dbReference type="MetOSite" id="Q81J17"/>
<dbReference type="GeneID" id="93010915"/>
<dbReference type="KEGG" id="bce:BC0159"/>
<dbReference type="PATRIC" id="fig|226900.8.peg.161"/>
<dbReference type="HOGENOM" id="CLU_074407_2_2_9"/>
<dbReference type="OrthoDB" id="9809073at2"/>
<dbReference type="PRO" id="PR:Q81J17"/>
<dbReference type="Proteomes" id="UP000001417">
    <property type="component" value="Chromosome"/>
</dbReference>
<dbReference type="GO" id="GO:0022625">
    <property type="term" value="C:cytosolic large ribosomal subunit"/>
    <property type="evidence" value="ECO:0000318"/>
    <property type="project" value="GO_Central"/>
</dbReference>
<dbReference type="GO" id="GO:0003735">
    <property type="term" value="F:structural constituent of ribosome"/>
    <property type="evidence" value="ECO:0000318"/>
    <property type="project" value="GO_Central"/>
</dbReference>
<dbReference type="GO" id="GO:0006412">
    <property type="term" value="P:translation"/>
    <property type="evidence" value="ECO:0007669"/>
    <property type="project" value="UniProtKB-UniRule"/>
</dbReference>
<dbReference type="FunFam" id="3.90.1030.10:FF:000002">
    <property type="entry name" value="50S ribosomal protein L17"/>
    <property type="match status" value="1"/>
</dbReference>
<dbReference type="Gene3D" id="3.90.1030.10">
    <property type="entry name" value="Ribosomal protein L17"/>
    <property type="match status" value="1"/>
</dbReference>
<dbReference type="HAMAP" id="MF_01368">
    <property type="entry name" value="Ribosomal_bL17"/>
    <property type="match status" value="1"/>
</dbReference>
<dbReference type="InterPro" id="IPR000456">
    <property type="entry name" value="Ribosomal_bL17"/>
</dbReference>
<dbReference type="InterPro" id="IPR047859">
    <property type="entry name" value="Ribosomal_bL17_CS"/>
</dbReference>
<dbReference type="InterPro" id="IPR036373">
    <property type="entry name" value="Ribosomal_bL17_sf"/>
</dbReference>
<dbReference type="NCBIfam" id="TIGR00059">
    <property type="entry name" value="L17"/>
    <property type="match status" value="1"/>
</dbReference>
<dbReference type="PANTHER" id="PTHR14413:SF16">
    <property type="entry name" value="LARGE RIBOSOMAL SUBUNIT PROTEIN BL17M"/>
    <property type="match status" value="1"/>
</dbReference>
<dbReference type="PANTHER" id="PTHR14413">
    <property type="entry name" value="RIBOSOMAL PROTEIN L17"/>
    <property type="match status" value="1"/>
</dbReference>
<dbReference type="Pfam" id="PF01196">
    <property type="entry name" value="Ribosomal_L17"/>
    <property type="match status" value="1"/>
</dbReference>
<dbReference type="SUPFAM" id="SSF64263">
    <property type="entry name" value="Prokaryotic ribosomal protein L17"/>
    <property type="match status" value="1"/>
</dbReference>
<dbReference type="PROSITE" id="PS01167">
    <property type="entry name" value="RIBOSOMAL_L17"/>
    <property type="match status" value="1"/>
</dbReference>
<comment type="subunit">
    <text evidence="1">Part of the 50S ribosomal subunit. Contacts protein L32.</text>
</comment>
<comment type="similarity">
    <text evidence="1">Belongs to the bacterial ribosomal protein bL17 family.</text>
</comment>
<reference key="1">
    <citation type="journal article" date="2003" name="Nature">
        <title>Genome sequence of Bacillus cereus and comparative analysis with Bacillus anthracis.</title>
        <authorList>
            <person name="Ivanova N."/>
            <person name="Sorokin A."/>
            <person name="Anderson I."/>
            <person name="Galleron N."/>
            <person name="Candelon B."/>
            <person name="Kapatral V."/>
            <person name="Bhattacharyya A."/>
            <person name="Reznik G."/>
            <person name="Mikhailova N."/>
            <person name="Lapidus A."/>
            <person name="Chu L."/>
            <person name="Mazur M."/>
            <person name="Goltsman E."/>
            <person name="Larsen N."/>
            <person name="D'Souza M."/>
            <person name="Walunas T."/>
            <person name="Grechkin Y."/>
            <person name="Pusch G."/>
            <person name="Haselkorn R."/>
            <person name="Fonstein M."/>
            <person name="Ehrlich S.D."/>
            <person name="Overbeek R."/>
            <person name="Kyrpides N.C."/>
        </authorList>
    </citation>
    <scope>NUCLEOTIDE SEQUENCE [LARGE SCALE GENOMIC DNA]</scope>
    <source>
        <strain>ATCC 14579 / DSM 31 / CCUG 7414 / JCM 2152 / NBRC 15305 / NCIMB 9373 / NCTC 2599 / NRRL B-3711</strain>
    </source>
</reference>
<keyword id="KW-1185">Reference proteome</keyword>
<keyword id="KW-0687">Ribonucleoprotein</keyword>
<keyword id="KW-0689">Ribosomal protein</keyword>
<sequence>MAYRKLGRTSAQRKAMLRDLATDLIINERIQTTETRAKELRSVVEKMITLGKRGDLHARRQAAAFIRNEVANAETGQDALQKLFADVAPRYAERQGGYTRIAKIGPRRGDAAPMVIIELV</sequence>
<name>RL17_BACCR</name>
<gene>
    <name evidence="1" type="primary">rplQ</name>
    <name type="ordered locus">BC_0159</name>
</gene>
<feature type="chain" id="PRO_0000267823" description="Large ribosomal subunit protein bL17">
    <location>
        <begin position="1"/>
        <end position="120"/>
    </location>
</feature>
<accession>Q81J17</accession>
<evidence type="ECO:0000255" key="1">
    <source>
        <dbReference type="HAMAP-Rule" id="MF_01368"/>
    </source>
</evidence>
<evidence type="ECO:0000305" key="2"/>
<protein>
    <recommendedName>
        <fullName evidence="1">Large ribosomal subunit protein bL17</fullName>
    </recommendedName>
    <alternativeName>
        <fullName evidence="2">50S ribosomal protein L17</fullName>
    </alternativeName>
</protein>